<comment type="function">
    <text evidence="1">Binds directly to 23S rRNA. Probably involved in E site tRNA release.</text>
</comment>
<comment type="function">
    <text evidence="1">Protein L1 is also a translational repressor protein, it controls the translation of its operon by binding to its mRNA.</text>
</comment>
<comment type="subunit">
    <text evidence="1">Part of the 50S ribosomal subunit.</text>
</comment>
<comment type="similarity">
    <text evidence="1">Belongs to the universal ribosomal protein uL1 family.</text>
</comment>
<gene>
    <name evidence="1" type="primary">rpl1</name>
    <name type="ordered locus">Msp_1265</name>
</gene>
<evidence type="ECO:0000255" key="1">
    <source>
        <dbReference type="HAMAP-Rule" id="MF_01318"/>
    </source>
</evidence>
<evidence type="ECO:0000305" key="2"/>
<reference key="1">
    <citation type="journal article" date="2006" name="J. Bacteriol.">
        <title>The genome sequence of Methanosphaera stadtmanae reveals why this human intestinal archaeon is restricted to methanol and H2 for methane formation and ATP synthesis.</title>
        <authorList>
            <person name="Fricke W.F."/>
            <person name="Seedorf H."/>
            <person name="Henne A."/>
            <person name="Kruer M."/>
            <person name="Liesegang H."/>
            <person name="Hedderich R."/>
            <person name="Gottschalk G."/>
            <person name="Thauer R.K."/>
        </authorList>
    </citation>
    <scope>NUCLEOTIDE SEQUENCE [LARGE SCALE GENOMIC DNA]</scope>
    <source>
        <strain>ATCC 43021 / DSM 3091 / JCM 11832 / MCB-3</strain>
    </source>
</reference>
<feature type="chain" id="PRO_0000308150" description="Large ribosomal subunit protein uL1">
    <location>
        <begin position="1"/>
        <end position="212"/>
    </location>
</feature>
<dbReference type="EMBL" id="CP000102">
    <property type="protein sequence ID" value="ABC57642.1"/>
    <property type="molecule type" value="Genomic_DNA"/>
</dbReference>
<dbReference type="RefSeq" id="WP_011406841.1">
    <property type="nucleotide sequence ID" value="NC_007681.1"/>
</dbReference>
<dbReference type="SMR" id="Q2NEW1"/>
<dbReference type="STRING" id="339860.Msp_1265"/>
<dbReference type="KEGG" id="mst:Msp_1265"/>
<dbReference type="eggNOG" id="arCOG04289">
    <property type="taxonomic scope" value="Archaea"/>
</dbReference>
<dbReference type="HOGENOM" id="CLU_062853_4_0_2"/>
<dbReference type="OrthoDB" id="10382at2157"/>
<dbReference type="Proteomes" id="UP000001931">
    <property type="component" value="Chromosome"/>
</dbReference>
<dbReference type="GO" id="GO:0015934">
    <property type="term" value="C:large ribosomal subunit"/>
    <property type="evidence" value="ECO:0007669"/>
    <property type="project" value="InterPro"/>
</dbReference>
<dbReference type="GO" id="GO:0019843">
    <property type="term" value="F:rRNA binding"/>
    <property type="evidence" value="ECO:0007669"/>
    <property type="project" value="UniProtKB-UniRule"/>
</dbReference>
<dbReference type="GO" id="GO:0003735">
    <property type="term" value="F:structural constituent of ribosome"/>
    <property type="evidence" value="ECO:0007669"/>
    <property type="project" value="InterPro"/>
</dbReference>
<dbReference type="GO" id="GO:0000049">
    <property type="term" value="F:tRNA binding"/>
    <property type="evidence" value="ECO:0007669"/>
    <property type="project" value="UniProtKB-KW"/>
</dbReference>
<dbReference type="GO" id="GO:0006417">
    <property type="term" value="P:regulation of translation"/>
    <property type="evidence" value="ECO:0007669"/>
    <property type="project" value="UniProtKB-KW"/>
</dbReference>
<dbReference type="GO" id="GO:0006412">
    <property type="term" value="P:translation"/>
    <property type="evidence" value="ECO:0007669"/>
    <property type="project" value="UniProtKB-UniRule"/>
</dbReference>
<dbReference type="CDD" id="cd00403">
    <property type="entry name" value="Ribosomal_L1"/>
    <property type="match status" value="1"/>
</dbReference>
<dbReference type="FunFam" id="3.40.50.790:FF:000005">
    <property type="entry name" value="50S ribosomal protein L1"/>
    <property type="match status" value="1"/>
</dbReference>
<dbReference type="Gene3D" id="3.30.190.20">
    <property type="match status" value="1"/>
</dbReference>
<dbReference type="Gene3D" id="3.40.50.790">
    <property type="match status" value="1"/>
</dbReference>
<dbReference type="HAMAP" id="MF_01318_A">
    <property type="entry name" value="Ribosomal_uL1_A"/>
    <property type="match status" value="1"/>
</dbReference>
<dbReference type="InterPro" id="IPR002143">
    <property type="entry name" value="Ribosomal_uL1"/>
</dbReference>
<dbReference type="InterPro" id="IPR023674">
    <property type="entry name" value="Ribosomal_uL1-like"/>
</dbReference>
<dbReference type="InterPro" id="IPR028364">
    <property type="entry name" value="Ribosomal_uL1/biogenesis"/>
</dbReference>
<dbReference type="InterPro" id="IPR016095">
    <property type="entry name" value="Ribosomal_uL1_3-a/b-sand"/>
</dbReference>
<dbReference type="InterPro" id="IPR023669">
    <property type="entry name" value="Ribosomal_uL1_arc"/>
</dbReference>
<dbReference type="NCBIfam" id="NF003244">
    <property type="entry name" value="PRK04203.1"/>
    <property type="match status" value="1"/>
</dbReference>
<dbReference type="PANTHER" id="PTHR36427">
    <property type="entry name" value="54S RIBOSOMAL PROTEIN L1, MITOCHONDRIAL"/>
    <property type="match status" value="1"/>
</dbReference>
<dbReference type="PANTHER" id="PTHR36427:SF3">
    <property type="entry name" value="LARGE RIBOSOMAL SUBUNIT PROTEIN UL1M"/>
    <property type="match status" value="1"/>
</dbReference>
<dbReference type="Pfam" id="PF00687">
    <property type="entry name" value="Ribosomal_L1"/>
    <property type="match status" value="1"/>
</dbReference>
<dbReference type="PIRSF" id="PIRSF002155">
    <property type="entry name" value="Ribosomal_L1"/>
    <property type="match status" value="1"/>
</dbReference>
<dbReference type="SUPFAM" id="SSF56808">
    <property type="entry name" value="Ribosomal protein L1"/>
    <property type="match status" value="1"/>
</dbReference>
<keyword id="KW-1185">Reference proteome</keyword>
<keyword id="KW-0678">Repressor</keyword>
<keyword id="KW-0687">Ribonucleoprotein</keyword>
<keyword id="KW-0689">Ribosomal protein</keyword>
<keyword id="KW-0694">RNA-binding</keyword>
<keyword id="KW-0699">rRNA-binding</keyword>
<keyword id="KW-0810">Translation regulation</keyword>
<keyword id="KW-0820">tRNA-binding</keyword>
<protein>
    <recommendedName>
        <fullName evidence="1">Large ribosomal subunit protein uL1</fullName>
    </recommendedName>
    <alternativeName>
        <fullName evidence="2">50S ribosomal protein L1</fullName>
    </alternativeName>
</protein>
<proteinExistence type="inferred from homology"/>
<sequence>MTQVIEEAVKKVLEESKPRNFTQSIDVVITINDLDINKPENRLDEEVLLPNGRGKDVKIAFIAEGELAYQAEQAGADLVINKEKLEELGKNRPEAKKLANSYDFFVAQTDLMPTVGRFLGPVLGPRKKMPKPIPASANPETILGRLRSTIKIRVKDQPIIQSIVGSEDMTEAQVAENIDAIMDVLDRNLEKGSKQIKAMYLKTTMGPVTRVI</sequence>
<accession>Q2NEW1</accession>
<organism>
    <name type="scientific">Methanosphaera stadtmanae (strain ATCC 43021 / DSM 3091 / JCM 11832 / MCB-3)</name>
    <dbReference type="NCBI Taxonomy" id="339860"/>
    <lineage>
        <taxon>Archaea</taxon>
        <taxon>Methanobacteriati</taxon>
        <taxon>Methanobacteriota</taxon>
        <taxon>Methanomada group</taxon>
        <taxon>Methanobacteria</taxon>
        <taxon>Methanobacteriales</taxon>
        <taxon>Methanobacteriaceae</taxon>
        <taxon>Methanosphaera</taxon>
    </lineage>
</organism>
<name>RL1_METST</name>